<gene>
    <name type="primary">spt20</name>
    <name type="ORF">SPAC4D7.10c</name>
</gene>
<feature type="chain" id="PRO_0000116700" description="SAGA complex subunit Spt20">
    <location>
        <begin position="1"/>
        <end position="473"/>
    </location>
</feature>
<feature type="region of interest" description="Disordered" evidence="2">
    <location>
        <begin position="134"/>
        <end position="179"/>
    </location>
</feature>
<feature type="region of interest" description="Disordered" evidence="2">
    <location>
        <begin position="304"/>
        <end position="385"/>
    </location>
</feature>
<feature type="compositionally biased region" description="Low complexity" evidence="2">
    <location>
        <begin position="142"/>
        <end position="163"/>
    </location>
</feature>
<feature type="compositionally biased region" description="Low complexity" evidence="2">
    <location>
        <begin position="304"/>
        <end position="327"/>
    </location>
</feature>
<feature type="compositionally biased region" description="Polar residues" evidence="2">
    <location>
        <begin position="335"/>
        <end position="344"/>
    </location>
</feature>
<feature type="compositionally biased region" description="Low complexity" evidence="2">
    <location>
        <begin position="361"/>
        <end position="377"/>
    </location>
</feature>
<protein>
    <recommendedName>
        <fullName>SAGA complex subunit Spt20</fullName>
    </recommendedName>
</protein>
<organism>
    <name type="scientific">Schizosaccharomyces pombe (strain 972 / ATCC 24843)</name>
    <name type="common">Fission yeast</name>
    <dbReference type="NCBI Taxonomy" id="284812"/>
    <lineage>
        <taxon>Eukaryota</taxon>
        <taxon>Fungi</taxon>
        <taxon>Dikarya</taxon>
        <taxon>Ascomycota</taxon>
        <taxon>Taphrinomycotina</taxon>
        <taxon>Schizosaccharomycetes</taxon>
        <taxon>Schizosaccharomycetales</taxon>
        <taxon>Schizosaccharomycetaceae</taxon>
        <taxon>Schizosaccharomyces</taxon>
    </lineage>
</organism>
<comment type="function">
    <text evidence="1 4 6">Component of the transcription coactivator SAGA complex. SAGA acts as a general cofactor required for essentially all RNA polymerase II transcription. At the promoters, SAGA is required for transcription pre-initiation complex (PIC) recruitment. It influences RNA polymerase II transcriptional activity through different activities such as TBP interaction (via core/TAF module) and promoter selectivity, interaction with transcription activators (via Tra1/SPT module), and chromatin modification through histone acetylation (via HAT module) and deubiquitination (via DUB module). SAGA preferentially acetylates histones H3 (to form H3K9ac, H3K14ac, H3K18ac and H3K23ac) and H2B and deubiquitinates histone H2B. SAGA interacts with DNA via upstream activating sequences (UASs) (By similarity). As part of the HAT module, involved in positive regulation of matings (PubMed:19056896). Regulates septin ring assembly partially through the transcriptional activation of mid2. Also regulates the stability of the septin ring and is required for the recruitment of mid2 (PubMed:25015293).</text>
</comment>
<comment type="subunit">
    <text evidence="1 4">Component of the 1.8 MDa SAGA (Spt-Ada-Gcn5 acetyltransferase) complex, which is composed of 19 subunits tra1, spt7, taf5, ngg1/ada3, sgf73, spt20, spt8, taf12, taf6, hfi1/ada1, ubp8, gcn5, ada2, spt3, sgf29, taf10, taf9, sgf11 and sus1 (PubMed:19056896). The SAGA complex is composed of 4 modules, namely the HAT (histone acetyltransferase) module (gcn5, ada2, ngg1/ada3 and sgf29), the DUB (deubiquitinating) module (ubp8, sgf11, sgf73 and sus1), the core or TAF (TBP-associated factor) module (taf5, taf6, taf9, taf10 and taf12), and the Tra1 or SPT (Suppressor of Ty) module (tra1, hfi1/ada1, spt3, spt7, spt8 and spt20). The Tra1/SPT module binds activators, the core module recruits TBP (TATA-binding protein), the HAT module contains the histone H3 acetyltransferase gcn5, and the DUB module comprises the histone H2B deubiquitinase ubp8 (By similarity).</text>
</comment>
<comment type="subcellular location">
    <subcellularLocation>
        <location evidence="3">Nucleus</location>
    </subcellularLocation>
    <subcellularLocation>
        <location evidence="3">Cytoplasm</location>
    </subcellularLocation>
</comment>
<comment type="disruption phenotype">
    <text evidence="4 5">Leads to decreased growth at high temperature and sensitivity to several drugs like hydroxyurea, caffeine, canavanine and rapamycin; as well as to raffinose.</text>
</comment>
<comment type="similarity">
    <text evidence="7">Belongs to the SPT20 family.</text>
</comment>
<evidence type="ECO:0000250" key="1">
    <source>
        <dbReference type="UniProtKB" id="P50875"/>
    </source>
</evidence>
<evidence type="ECO:0000256" key="2">
    <source>
        <dbReference type="SAM" id="MobiDB-lite"/>
    </source>
</evidence>
<evidence type="ECO:0000269" key="3">
    <source>
    </source>
</evidence>
<evidence type="ECO:0000269" key="4">
    <source>
    </source>
</evidence>
<evidence type="ECO:0000269" key="5">
    <source>
    </source>
</evidence>
<evidence type="ECO:0000269" key="6">
    <source>
    </source>
</evidence>
<evidence type="ECO:0000305" key="7"/>
<sequence length="473" mass="54028">MERNNGLGDYTYRYHGKELSLDDFQNKQGIESSDDAFLSKIYENVSNFNVPRKLHDIEHKFSKEEPSLILHIHKFHFRFEQQDGAFTYNGPVKSILQYIRMELIPPDCLEVFRNSDVKFYDGCLTVRIIDHRQSPSADQTVQPQPGSTNQQQQNNTNPINNQPEDTKPNTNSPPVYHTVLRPTPETLWQDLCLLSESFANSLSDEAVLTLESNILLASEAPLFLTPAKSKAEMIQFMNQLADSAPPCTRKKPQGSAQLADEEAERLEKENLLLLMDDQRKRDFQPTFQRLQFIENVRRKRAILQQRQMQMQQQQKAQQQQSPKAQQPPAHLVQSAPVQRKTTPKIQRLPPSSIQIPPPKPMQKFPANAASSESPPNATGNFLPSGPVPANEPMLKRESVDLIKIRQLAILFQQRASQLKARGATREQITEILNRQAIAAGTDLATVMTVARNLHFQQLQMRQQQQQQQMKAER</sequence>
<name>SPT20_SCHPO</name>
<proteinExistence type="evidence at protein level"/>
<keyword id="KW-0963">Cytoplasm</keyword>
<keyword id="KW-0539">Nucleus</keyword>
<keyword id="KW-1185">Reference proteome</keyword>
<keyword id="KW-0804">Transcription</keyword>
<keyword id="KW-0805">Transcription regulation</keyword>
<reference key="1">
    <citation type="journal article" date="2002" name="Nature">
        <title>The genome sequence of Schizosaccharomyces pombe.</title>
        <authorList>
            <person name="Wood V."/>
            <person name="Gwilliam R."/>
            <person name="Rajandream M.A."/>
            <person name="Lyne M.H."/>
            <person name="Lyne R."/>
            <person name="Stewart A."/>
            <person name="Sgouros J.G."/>
            <person name="Peat N."/>
            <person name="Hayles J."/>
            <person name="Baker S.G."/>
            <person name="Basham D."/>
            <person name="Bowman S."/>
            <person name="Brooks K."/>
            <person name="Brown D."/>
            <person name="Brown S."/>
            <person name="Chillingworth T."/>
            <person name="Churcher C.M."/>
            <person name="Collins M."/>
            <person name="Connor R."/>
            <person name="Cronin A."/>
            <person name="Davis P."/>
            <person name="Feltwell T."/>
            <person name="Fraser A."/>
            <person name="Gentles S."/>
            <person name="Goble A."/>
            <person name="Hamlin N."/>
            <person name="Harris D.E."/>
            <person name="Hidalgo J."/>
            <person name="Hodgson G."/>
            <person name="Holroyd S."/>
            <person name="Hornsby T."/>
            <person name="Howarth S."/>
            <person name="Huckle E.J."/>
            <person name="Hunt S."/>
            <person name="Jagels K."/>
            <person name="James K.D."/>
            <person name="Jones L."/>
            <person name="Jones M."/>
            <person name="Leather S."/>
            <person name="McDonald S."/>
            <person name="McLean J."/>
            <person name="Mooney P."/>
            <person name="Moule S."/>
            <person name="Mungall K.L."/>
            <person name="Murphy L.D."/>
            <person name="Niblett D."/>
            <person name="Odell C."/>
            <person name="Oliver K."/>
            <person name="O'Neil S."/>
            <person name="Pearson D."/>
            <person name="Quail M.A."/>
            <person name="Rabbinowitsch E."/>
            <person name="Rutherford K.M."/>
            <person name="Rutter S."/>
            <person name="Saunders D."/>
            <person name="Seeger K."/>
            <person name="Sharp S."/>
            <person name="Skelton J."/>
            <person name="Simmonds M.N."/>
            <person name="Squares R."/>
            <person name="Squares S."/>
            <person name="Stevens K."/>
            <person name="Taylor K."/>
            <person name="Taylor R.G."/>
            <person name="Tivey A."/>
            <person name="Walsh S.V."/>
            <person name="Warren T."/>
            <person name="Whitehead S."/>
            <person name="Woodward J.R."/>
            <person name="Volckaert G."/>
            <person name="Aert R."/>
            <person name="Robben J."/>
            <person name="Grymonprez B."/>
            <person name="Weltjens I."/>
            <person name="Vanstreels E."/>
            <person name="Rieger M."/>
            <person name="Schaefer M."/>
            <person name="Mueller-Auer S."/>
            <person name="Gabel C."/>
            <person name="Fuchs M."/>
            <person name="Duesterhoeft A."/>
            <person name="Fritzc C."/>
            <person name="Holzer E."/>
            <person name="Moestl D."/>
            <person name="Hilbert H."/>
            <person name="Borzym K."/>
            <person name="Langer I."/>
            <person name="Beck A."/>
            <person name="Lehrach H."/>
            <person name="Reinhardt R."/>
            <person name="Pohl T.M."/>
            <person name="Eger P."/>
            <person name="Zimmermann W."/>
            <person name="Wedler H."/>
            <person name="Wambutt R."/>
            <person name="Purnelle B."/>
            <person name="Goffeau A."/>
            <person name="Cadieu E."/>
            <person name="Dreano S."/>
            <person name="Gloux S."/>
            <person name="Lelaure V."/>
            <person name="Mottier S."/>
            <person name="Galibert F."/>
            <person name="Aves S.J."/>
            <person name="Xiang Z."/>
            <person name="Hunt C."/>
            <person name="Moore K."/>
            <person name="Hurst S.M."/>
            <person name="Lucas M."/>
            <person name="Rochet M."/>
            <person name="Gaillardin C."/>
            <person name="Tallada V.A."/>
            <person name="Garzon A."/>
            <person name="Thode G."/>
            <person name="Daga R.R."/>
            <person name="Cruzado L."/>
            <person name="Jimenez J."/>
            <person name="Sanchez M."/>
            <person name="del Rey F."/>
            <person name="Benito J."/>
            <person name="Dominguez A."/>
            <person name="Revuelta J.L."/>
            <person name="Moreno S."/>
            <person name="Armstrong J."/>
            <person name="Forsburg S.L."/>
            <person name="Cerutti L."/>
            <person name="Lowe T."/>
            <person name="McCombie W.R."/>
            <person name="Paulsen I."/>
            <person name="Potashkin J."/>
            <person name="Shpakovski G.V."/>
            <person name="Ussery D."/>
            <person name="Barrell B.G."/>
            <person name="Nurse P."/>
        </authorList>
    </citation>
    <scope>NUCLEOTIDE SEQUENCE [LARGE SCALE GENOMIC DNA]</scope>
    <source>
        <strain>972 / ATCC 24843</strain>
    </source>
</reference>
<reference key="2">
    <citation type="journal article" date="2006" name="Nat. Biotechnol.">
        <title>ORFeome cloning and global analysis of protein localization in the fission yeast Schizosaccharomyces pombe.</title>
        <authorList>
            <person name="Matsuyama A."/>
            <person name="Arai R."/>
            <person name="Yashiroda Y."/>
            <person name="Shirai A."/>
            <person name="Kamata A."/>
            <person name="Sekido S."/>
            <person name="Kobayashi Y."/>
            <person name="Hashimoto A."/>
            <person name="Hamamoto M."/>
            <person name="Hiraoka Y."/>
            <person name="Horinouchi S."/>
            <person name="Yoshida M."/>
        </authorList>
    </citation>
    <scope>SUBCELLULAR LOCATION [LARGE SCALE ANALYSIS]</scope>
</reference>
<reference key="3">
    <citation type="journal article" date="2008" name="Genes Dev.">
        <title>The S. pombe SAGA complex controls the switch from proliferation to sexual differentiation through the opposing roles of its subunits Gcn5 and Spt8.</title>
        <authorList>
            <person name="Helmlinger D."/>
            <person name="Marguerat S."/>
            <person name="Villen J."/>
            <person name="Gygi S.P."/>
            <person name="Bahler J."/>
            <person name="Winston F."/>
        </authorList>
    </citation>
    <scope>IDENTIFICATION IN THE SAGA COMPLEX</scope>
    <scope>IDENTIFICATION BY MASS SPECTROMETRY</scope>
    <scope>FUNCTION</scope>
    <scope>DISRUPTION PHENOTYPE</scope>
</reference>
<reference key="4">
    <citation type="journal article" date="2011" name="EMBO J.">
        <title>Tra1 has specific regulatory roles, rather than global functions, within the SAGA co-activator complex.</title>
        <authorList>
            <person name="Helmlinger D."/>
            <person name="Marguerat S."/>
            <person name="Villen J."/>
            <person name="Swaney D.L."/>
            <person name="Gygi S.P."/>
            <person name="Bahler J."/>
            <person name="Winston F."/>
        </authorList>
    </citation>
    <scope>DISRUPTION PHENOTYPE</scope>
</reference>
<reference key="5">
    <citation type="journal article" date="2014" name="J. Cell Sci.">
        <title>Septin ring assembly is regulated by Spt20, a structural subunit of the SAGA complex.</title>
        <authorList>
            <person name="Lei B."/>
            <person name="Zhou N."/>
            <person name="Guo Y."/>
            <person name="Zhao W."/>
            <person name="Tan Y.W."/>
            <person name="Yu Y."/>
            <person name="Lu H."/>
        </authorList>
    </citation>
    <scope>FUNCTION</scope>
</reference>
<accession>O14174</accession>
<dbReference type="EMBL" id="CU329670">
    <property type="protein sequence ID" value="CAB11282.1"/>
    <property type="molecule type" value="Genomic_DNA"/>
</dbReference>
<dbReference type="PIR" id="T38801">
    <property type="entry name" value="T38801"/>
</dbReference>
<dbReference type="RefSeq" id="NP_594963.1">
    <property type="nucleotide sequence ID" value="NM_001020394.2"/>
</dbReference>
<dbReference type="BioGRID" id="280089">
    <property type="interactions" value="13"/>
</dbReference>
<dbReference type="FunCoup" id="O14174">
    <property type="interactions" value="26"/>
</dbReference>
<dbReference type="IntAct" id="O14174">
    <property type="interactions" value="2"/>
</dbReference>
<dbReference type="MINT" id="O14174"/>
<dbReference type="STRING" id="284812.O14174"/>
<dbReference type="iPTMnet" id="O14174"/>
<dbReference type="PaxDb" id="4896-SPAC4D7.10c.1"/>
<dbReference type="EnsemblFungi" id="SPAC4D7.10c.1">
    <property type="protein sequence ID" value="SPAC4D7.10c.1:pep"/>
    <property type="gene ID" value="SPAC4D7.10c"/>
</dbReference>
<dbReference type="PomBase" id="SPAC4D7.10c">
    <property type="gene designation" value="spt20"/>
</dbReference>
<dbReference type="VEuPathDB" id="FungiDB:SPAC4D7.10c"/>
<dbReference type="eggNOG" id="ENOG502QS30">
    <property type="taxonomic scope" value="Eukaryota"/>
</dbReference>
<dbReference type="HOGENOM" id="CLU_577656_0_0_1"/>
<dbReference type="InParanoid" id="O14174"/>
<dbReference type="OMA" id="RMELIPP"/>
<dbReference type="PhylomeDB" id="O14174"/>
<dbReference type="PRO" id="PR:O14174"/>
<dbReference type="Proteomes" id="UP000002485">
    <property type="component" value="Chromosome I"/>
</dbReference>
<dbReference type="GO" id="GO:0005737">
    <property type="term" value="C:cytoplasm"/>
    <property type="evidence" value="ECO:0000314"/>
    <property type="project" value="PomBase"/>
</dbReference>
<dbReference type="GO" id="GO:0005829">
    <property type="term" value="C:cytosol"/>
    <property type="evidence" value="ECO:0007005"/>
    <property type="project" value="PomBase"/>
</dbReference>
<dbReference type="GO" id="GO:0036391">
    <property type="term" value="C:medial cortex septin ring"/>
    <property type="evidence" value="ECO:0000314"/>
    <property type="project" value="PomBase"/>
</dbReference>
<dbReference type="GO" id="GO:0005634">
    <property type="term" value="C:nucleus"/>
    <property type="evidence" value="ECO:0000314"/>
    <property type="project" value="PomBase"/>
</dbReference>
<dbReference type="GO" id="GO:0000124">
    <property type="term" value="C:SAGA complex"/>
    <property type="evidence" value="ECO:0000314"/>
    <property type="project" value="PomBase"/>
</dbReference>
<dbReference type="GO" id="GO:0003713">
    <property type="term" value="F:transcription coactivator activity"/>
    <property type="evidence" value="ECO:0000266"/>
    <property type="project" value="PomBase"/>
</dbReference>
<dbReference type="GO" id="GO:0006357">
    <property type="term" value="P:regulation of transcription by RNA polymerase II"/>
    <property type="evidence" value="ECO:0000269"/>
    <property type="project" value="PomBase"/>
</dbReference>
<dbReference type="GO" id="GO:0031106">
    <property type="term" value="P:septin ring organization"/>
    <property type="evidence" value="ECO:0000315"/>
    <property type="project" value="PomBase"/>
</dbReference>
<dbReference type="GO" id="GO:0045815">
    <property type="term" value="P:transcription initiation-coupled chromatin remodeling"/>
    <property type="evidence" value="ECO:0000305"/>
    <property type="project" value="PomBase"/>
</dbReference>
<dbReference type="InterPro" id="IPR021950">
    <property type="entry name" value="Spt20"/>
</dbReference>
<dbReference type="InterPro" id="IPR046468">
    <property type="entry name" value="Spt20-like_SEP"/>
</dbReference>
<dbReference type="PANTHER" id="PTHR13526">
    <property type="entry name" value="TRANSCRIPTION FACTOR SPT20 HOMOLOG"/>
    <property type="match status" value="1"/>
</dbReference>
<dbReference type="PANTHER" id="PTHR13526:SF8">
    <property type="entry name" value="TRANSCRIPTION FACTOR SPT20 HOMOLOG"/>
    <property type="match status" value="1"/>
</dbReference>
<dbReference type="Pfam" id="PF12090">
    <property type="entry name" value="Spt20_SEP"/>
    <property type="match status" value="1"/>
</dbReference>